<accession>P55397</accession>
<dbReference type="EMBL" id="U00090">
    <property type="protein sequence ID" value="AAB92430.1"/>
    <property type="molecule type" value="Genomic_DNA"/>
</dbReference>
<dbReference type="RefSeq" id="NP_443807.1">
    <property type="nucleotide sequence ID" value="NC_000914.2"/>
</dbReference>
<dbReference type="RefSeq" id="WP_010875429.1">
    <property type="nucleotide sequence ID" value="NC_000914.2"/>
</dbReference>
<dbReference type="KEGG" id="rhi:NGR_a04190"/>
<dbReference type="PATRIC" id="fig|394.7.peg.440"/>
<dbReference type="eggNOG" id="COG5268">
    <property type="taxonomic scope" value="Bacteria"/>
</dbReference>
<dbReference type="HOGENOM" id="CLU_173974_1_0_5"/>
<dbReference type="OrthoDB" id="7063374at2"/>
<dbReference type="Proteomes" id="UP000001054">
    <property type="component" value="Plasmid pNGR234a"/>
</dbReference>
<dbReference type="GO" id="GO:0005886">
    <property type="term" value="C:plasma membrane"/>
    <property type="evidence" value="ECO:0007669"/>
    <property type="project" value="UniProtKB-SubCell"/>
</dbReference>
<dbReference type="InterPro" id="IPR016704">
    <property type="entry name" value="Conjugal_tfr_TrbD"/>
</dbReference>
<dbReference type="InterPro" id="IPR007792">
    <property type="entry name" value="T4SS_VirB3/TrbD/AvhB"/>
</dbReference>
<dbReference type="NCBIfam" id="NF010395">
    <property type="entry name" value="PRK13823.1"/>
    <property type="match status" value="1"/>
</dbReference>
<dbReference type="Pfam" id="PF05101">
    <property type="entry name" value="VirB3"/>
    <property type="match status" value="1"/>
</dbReference>
<dbReference type="PIRSF" id="PIRSF017854">
    <property type="entry name" value="T4SS_TrbD"/>
    <property type="match status" value="1"/>
</dbReference>
<feature type="chain" id="PRO_0000065612" description="Probable conjugal transfer protein TrbD">
    <location>
        <begin position="1"/>
        <end position="99"/>
    </location>
</feature>
<feature type="transmembrane region" description="Helical" evidence="1">
    <location>
        <begin position="21"/>
        <end position="41"/>
    </location>
</feature>
<feature type="transmembrane region" description="Helical" evidence="1">
    <location>
        <begin position="42"/>
        <end position="62"/>
    </location>
</feature>
<gene>
    <name type="primary">trbD</name>
    <name type="ordered locus">NGR_a04190</name>
    <name type="ORF">y4cO</name>
</gene>
<keyword id="KW-1003">Cell membrane</keyword>
<keyword id="KW-0184">Conjugation</keyword>
<keyword id="KW-0472">Membrane</keyword>
<keyword id="KW-0614">Plasmid</keyword>
<keyword id="KW-1185">Reference proteome</keyword>
<keyword id="KW-0812">Transmembrane</keyword>
<keyword id="KW-1133">Transmembrane helix</keyword>
<reference key="1">
    <citation type="journal article" date="1997" name="Nature">
        <title>Molecular basis of symbiosis between Rhizobium and legumes.</title>
        <authorList>
            <person name="Freiberg C.A."/>
            <person name="Fellay R."/>
            <person name="Bairoch A."/>
            <person name="Broughton W.J."/>
            <person name="Rosenthal A."/>
            <person name="Perret X."/>
        </authorList>
    </citation>
    <scope>NUCLEOTIDE SEQUENCE [LARGE SCALE GENOMIC DNA]</scope>
    <source>
        <strain>NBRC 101917 / NGR234</strain>
    </source>
</reference>
<reference key="2">
    <citation type="journal article" date="2009" name="Appl. Environ. Microbiol.">
        <title>Rhizobium sp. strain NGR234 possesses a remarkable number of secretion systems.</title>
        <authorList>
            <person name="Schmeisser C."/>
            <person name="Liesegang H."/>
            <person name="Krysciak D."/>
            <person name="Bakkou N."/>
            <person name="Le Quere A."/>
            <person name="Wollherr A."/>
            <person name="Heinemeyer I."/>
            <person name="Morgenstern B."/>
            <person name="Pommerening-Roeser A."/>
            <person name="Flores M."/>
            <person name="Palacios R."/>
            <person name="Brenner S."/>
            <person name="Gottschalk G."/>
            <person name="Schmitz R.A."/>
            <person name="Broughton W.J."/>
            <person name="Perret X."/>
            <person name="Strittmatter A.W."/>
            <person name="Streit W.R."/>
        </authorList>
    </citation>
    <scope>NUCLEOTIDE SEQUENCE [LARGE SCALE GENOMIC DNA]</scope>
    <source>
        <strain>NBRC 101917 / NGR234</strain>
    </source>
</reference>
<protein>
    <recommendedName>
        <fullName>Probable conjugal transfer protein TrbD</fullName>
    </recommendedName>
</protein>
<evidence type="ECO:0000255" key="1"/>
<evidence type="ECO:0000305" key="2"/>
<sequence>MAEALSERYRNRIHRALSRPNLLMGADRELVLITGLAAVILIFVVLTVYSALFGVVVWIVIVGLLRMMAKSDPLMRQVYVRHISYKPYYKATTSPWRRY</sequence>
<name>TRBD_SINFN</name>
<geneLocation type="plasmid">
    <name>sym pNGR234a</name>
</geneLocation>
<comment type="subcellular location">
    <subcellularLocation>
        <location evidence="2">Cell membrane</location>
        <topology evidence="2">Multi-pass membrane protein</topology>
    </subcellularLocation>
</comment>
<comment type="similarity">
    <text evidence="2">Belongs to the TrbD family.</text>
</comment>
<proteinExistence type="inferred from homology"/>
<organism>
    <name type="scientific">Sinorhizobium fredii (strain NBRC 101917 / NGR234)</name>
    <dbReference type="NCBI Taxonomy" id="394"/>
    <lineage>
        <taxon>Bacteria</taxon>
        <taxon>Pseudomonadati</taxon>
        <taxon>Pseudomonadota</taxon>
        <taxon>Alphaproteobacteria</taxon>
        <taxon>Hyphomicrobiales</taxon>
        <taxon>Rhizobiaceae</taxon>
        <taxon>Sinorhizobium/Ensifer group</taxon>
        <taxon>Sinorhizobium</taxon>
    </lineage>
</organism>